<keyword id="KW-0378">Hydrolase</keyword>
<keyword id="KW-0472">Membrane</keyword>
<keyword id="KW-0645">Protease</keyword>
<keyword id="KW-1185">Reference proteome</keyword>
<keyword id="KW-0788">Thiol protease</keyword>
<keyword id="KW-0812">Transmembrane</keyword>
<keyword id="KW-1133">Transmembrane helix</keyword>
<comment type="function">
    <text>Probable cysteine protease.</text>
</comment>
<comment type="subcellular location">
    <subcellularLocation>
        <location evidence="3">Membrane</location>
        <topology evidence="3">Single-pass membrane protein</topology>
    </subcellularLocation>
</comment>
<comment type="similarity">
    <text evidence="2">Belongs to the peptidase C1 family.</text>
</comment>
<accession>Q91FG3</accession>
<protein>
    <recommendedName>
        <fullName>Probable cysteine proteinase 361L</fullName>
        <ecNumber evidence="3">3.4.22.-</ecNumber>
    </recommendedName>
</protein>
<feature type="chain" id="PRO_0000377499" description="Probable cysteine proteinase 361L">
    <location>
        <begin position="1"/>
        <end position="542"/>
    </location>
</feature>
<feature type="transmembrane region" description="Helical" evidence="1">
    <location>
        <begin position="520"/>
        <end position="540"/>
    </location>
</feature>
<feature type="active site" evidence="2">
    <location>
        <position position="172"/>
    </location>
</feature>
<feature type="active site" evidence="2">
    <location>
        <position position="382"/>
    </location>
</feature>
<feature type="active site" evidence="2">
    <location>
        <position position="414"/>
    </location>
</feature>
<evidence type="ECO:0000255" key="1"/>
<evidence type="ECO:0000255" key="2">
    <source>
        <dbReference type="PROSITE-ProRule" id="PRU10088"/>
    </source>
</evidence>
<evidence type="ECO:0000305" key="3"/>
<organismHost>
    <name type="scientific">Acheta domesticus</name>
    <name type="common">House cricket</name>
    <dbReference type="NCBI Taxonomy" id="6997"/>
</organismHost>
<organismHost>
    <name type="scientific">Chilo suppressalis</name>
    <name type="common">Asiatic rice borer moth</name>
    <dbReference type="NCBI Taxonomy" id="168631"/>
</organismHost>
<organismHost>
    <name type="scientific">Gryllus bimaculatus</name>
    <name type="common">Two-spotted cricket</name>
    <dbReference type="NCBI Taxonomy" id="6999"/>
</organismHost>
<organismHost>
    <name type="scientific">Gryllus campestris</name>
    <dbReference type="NCBI Taxonomy" id="58607"/>
</organismHost>
<organismHost>
    <name type="scientific">Spodoptera frugiperda</name>
    <name type="common">Fall armyworm</name>
    <dbReference type="NCBI Taxonomy" id="7108"/>
</organismHost>
<reference key="1">
    <citation type="journal article" date="2001" name="Virology">
        <title>Analysis of the first complete DNA sequence of an invertebrate iridovirus: coding strategy of the genome of Chilo iridescent virus.</title>
        <authorList>
            <person name="Jakob N.J."/>
            <person name="Mueller K."/>
            <person name="Bahr U."/>
            <person name="Darai G."/>
        </authorList>
    </citation>
    <scope>NUCLEOTIDE SEQUENCE [LARGE SCALE GENOMIC DNA]</scope>
</reference>
<reference key="2">
    <citation type="journal article" date="2007" name="Virol. J.">
        <title>Comparative genomic analysis of the family Iridoviridae: re-annotating and defining the core set of iridovirus genes.</title>
        <authorList>
            <person name="Eaton H.E."/>
            <person name="Metcalf J."/>
            <person name="Penny E."/>
            <person name="Tcherepanov V."/>
            <person name="Upton C."/>
            <person name="Brunetti C.R."/>
        </authorList>
    </citation>
    <scope>GENOME REANNOTATION</scope>
</reference>
<gene>
    <name type="ORF">IIV6-361L</name>
</gene>
<name>361L_IIV6</name>
<organism>
    <name type="scientific">Invertebrate iridescent virus 6</name>
    <name type="common">IIV-6</name>
    <name type="synonym">Chilo iridescent virus</name>
    <dbReference type="NCBI Taxonomy" id="176652"/>
    <lineage>
        <taxon>Viruses</taxon>
        <taxon>Varidnaviria</taxon>
        <taxon>Bamfordvirae</taxon>
        <taxon>Nucleocytoviricota</taxon>
        <taxon>Megaviricetes</taxon>
        <taxon>Pimascovirales</taxon>
        <taxon>Iridoviridae</taxon>
        <taxon>Betairidovirinae</taxon>
        <taxon>Iridovirus</taxon>
    </lineage>
</organism>
<sequence>MTSIINQRWPLGNLMDGFPNGEKQNKLSFGGVPEKGYFEEFNKDPKYISFSGTPEKAYFEEFNRYRNIDEDDNRDTFPLFNEISSNPESESYLQTFVDNVRINTDINFVSKTNSFSQNDLSYLNATYVDKSLSLELPIKFNWAKTTSADSPDVVAKKKLISKPDNQYLCGSCWAVSVAGVVGDVFAVAGLVNWVPNISATYALIHYPQGRCKGGDPATLLYNIANNGIPSKHCVDYSWCSQNRTCTTADSAAHFGSDLSPLIPKDRGCYFDSEHYIFKIDSNIRTIVAGSGAIDVSNVQRTIKEYIYTTGPAVGGYIIFRNFTSKVPFGPHKGNSTFNVINGGVYLEKANYAQYRGEYGEHITEGLTFSSSNTDSDNYAGGHAISIMGWGIQPRIRVGNGPNDIADVPYWYCRNSWGTKWGMNGGYFKIAMYPYNRKSQFSKIVELMTPQGQHIRLGGVLAFTVSNPPVLKKLPANKQPPNPNSLSKLLDYYKNDEDDIVTKLPNIVPPSDGKKSTTSKTNNWYIYALIIIFILIIFFVLRK</sequence>
<proteinExistence type="inferred from homology"/>
<dbReference type="EC" id="3.4.22.-" evidence="3"/>
<dbReference type="EMBL" id="AF303741">
    <property type="protein sequence ID" value="AAK82221.1"/>
    <property type="molecule type" value="Genomic_DNA"/>
</dbReference>
<dbReference type="RefSeq" id="NP_149824.1">
    <property type="nucleotide sequence ID" value="NC_003038.1"/>
</dbReference>
<dbReference type="KEGG" id="vg:1733399"/>
<dbReference type="OrthoDB" id="4752at10239"/>
<dbReference type="Proteomes" id="UP000001359">
    <property type="component" value="Genome"/>
</dbReference>
<dbReference type="GO" id="GO:0016020">
    <property type="term" value="C:membrane"/>
    <property type="evidence" value="ECO:0007669"/>
    <property type="project" value="UniProtKB-SubCell"/>
</dbReference>
<dbReference type="GO" id="GO:0008234">
    <property type="term" value="F:cysteine-type peptidase activity"/>
    <property type="evidence" value="ECO:0007669"/>
    <property type="project" value="UniProtKB-KW"/>
</dbReference>
<dbReference type="GO" id="GO:0006508">
    <property type="term" value="P:proteolysis"/>
    <property type="evidence" value="ECO:0007669"/>
    <property type="project" value="UniProtKB-KW"/>
</dbReference>
<dbReference type="Gene3D" id="3.90.70.10">
    <property type="entry name" value="Cysteine proteinases"/>
    <property type="match status" value="1"/>
</dbReference>
<dbReference type="InterPro" id="IPR038765">
    <property type="entry name" value="Papain-like_cys_pep_sf"/>
</dbReference>
<dbReference type="InterPro" id="IPR000169">
    <property type="entry name" value="Pept_cys_AS"/>
</dbReference>
<dbReference type="InterPro" id="IPR013128">
    <property type="entry name" value="Peptidase_C1A"/>
</dbReference>
<dbReference type="InterPro" id="IPR000668">
    <property type="entry name" value="Peptidase_C1A_C"/>
</dbReference>
<dbReference type="PANTHER" id="PTHR12411">
    <property type="entry name" value="CYSTEINE PROTEASE FAMILY C1-RELATED"/>
    <property type="match status" value="1"/>
</dbReference>
<dbReference type="Pfam" id="PF00112">
    <property type="entry name" value="Peptidase_C1"/>
    <property type="match status" value="2"/>
</dbReference>
<dbReference type="PRINTS" id="PR00705">
    <property type="entry name" value="PAPAIN"/>
</dbReference>
<dbReference type="SMART" id="SM00645">
    <property type="entry name" value="Pept_C1"/>
    <property type="match status" value="1"/>
</dbReference>
<dbReference type="SUPFAM" id="SSF54001">
    <property type="entry name" value="Cysteine proteinases"/>
    <property type="match status" value="1"/>
</dbReference>
<dbReference type="PROSITE" id="PS00139">
    <property type="entry name" value="THIOL_PROTEASE_CYS"/>
    <property type="match status" value="1"/>
</dbReference>